<name>PUP_STRGG</name>
<accession>B1W305</accession>
<comment type="function">
    <text evidence="1">Protein modifier that is covalently attached to lysine residues of substrate proteins, thereby targeting them for proteasomal degradation. The tagging system is termed pupylation.</text>
</comment>
<comment type="pathway">
    <text evidence="1">Protein degradation; proteasomal Pup-dependent pathway.</text>
</comment>
<comment type="subunit">
    <text evidence="1">Strongly interacts with the proteasome-associated ATPase ARC through a hydrophobic interface; the interacting region of Pup lies in its C-terminal half. There is one Pup binding site per ARC hexamer ring.</text>
</comment>
<comment type="domain">
    <text evidence="1">The N-terminal unstructured half of Pup provides a signal required to initiate unfolding and degradation by the proteasome but is not needed for pupylation, while the C-terminal helical half of Pup interacts with ARC to target proteins to the proteasome.</text>
</comment>
<comment type="PTM">
    <text evidence="1">Is modified by deamidation of its C-terminal glutamine to glutamate by the deamidase Dop, a prerequisite to the subsequent pupylation process.</text>
</comment>
<comment type="similarity">
    <text evidence="1">Belongs to the prokaryotic ubiquitin-like protein family.</text>
</comment>
<feature type="chain" id="PRO_0000390615" description="Prokaryotic ubiquitin-like protein Pup">
    <location>
        <begin position="1"/>
        <end position="72"/>
    </location>
</feature>
<feature type="region of interest" description="Disordered" evidence="2">
    <location>
        <begin position="1"/>
        <end position="45"/>
    </location>
</feature>
<feature type="region of interest" description="ARC ATPase binding" evidence="1">
    <location>
        <begin position="28"/>
        <end position="66"/>
    </location>
</feature>
<feature type="coiled-coil region" evidence="1">
    <location>
        <begin position="10"/>
        <end position="60"/>
    </location>
</feature>
<feature type="compositionally biased region" description="Gly residues" evidence="2">
    <location>
        <begin position="1"/>
        <end position="10"/>
    </location>
</feature>
<feature type="compositionally biased region" description="Basic and acidic residues" evidence="2">
    <location>
        <begin position="33"/>
        <end position="42"/>
    </location>
</feature>
<feature type="modified residue" description="Deamidated glutamine" evidence="1">
    <location>
        <position position="72"/>
    </location>
</feature>
<feature type="cross-link" description="Isoglutamyl lysine isopeptide (Gln-Lys) (interchain with K-? in acceptor proteins)" evidence="1">
    <location>
        <position position="72"/>
    </location>
</feature>
<protein>
    <recommendedName>
        <fullName evidence="1">Prokaryotic ubiquitin-like protein Pup</fullName>
    </recommendedName>
    <alternativeName>
        <fullName evidence="1">Bacterial ubiquitin-like modifier</fullName>
    </alternativeName>
</protein>
<reference key="1">
    <citation type="journal article" date="2008" name="J. Bacteriol.">
        <title>Genome sequence of the streptomycin-producing microorganism Streptomyces griseus IFO 13350.</title>
        <authorList>
            <person name="Ohnishi Y."/>
            <person name="Ishikawa J."/>
            <person name="Hara H."/>
            <person name="Suzuki H."/>
            <person name="Ikenoya M."/>
            <person name="Ikeda H."/>
            <person name="Yamashita A."/>
            <person name="Hattori M."/>
            <person name="Horinouchi S."/>
        </authorList>
    </citation>
    <scope>NUCLEOTIDE SEQUENCE [LARGE SCALE GENOMIC DNA]</scope>
    <source>
        <strain>JCM 4626 / CBS 651.72 / NBRC 13350 / KCC S-0626 / ISP 5235</strain>
    </source>
</reference>
<gene>
    <name evidence="1" type="primary">pup</name>
    <name type="ordered locus">SGR_5858</name>
</gene>
<sequence length="72" mass="7918">MATKDTGGGQQKATRSTEEVEEQAQDAQASEDLAERQEKLSDDVDSVLDEIDDVLEENAEDFVRSFVQKGGQ</sequence>
<proteinExistence type="inferred from homology"/>
<keyword id="KW-0175">Coiled coil</keyword>
<keyword id="KW-1017">Isopeptide bond</keyword>
<keyword id="KW-0833">Ubl conjugation pathway</keyword>
<dbReference type="EMBL" id="AP009493">
    <property type="protein sequence ID" value="BAG22687.1"/>
    <property type="molecule type" value="Genomic_DNA"/>
</dbReference>
<dbReference type="RefSeq" id="WP_003970166.1">
    <property type="nucleotide sequence ID" value="NC_010572.1"/>
</dbReference>
<dbReference type="SMR" id="B1W305"/>
<dbReference type="KEGG" id="sgr:SGR_5858"/>
<dbReference type="eggNOG" id="ENOG50333JS">
    <property type="taxonomic scope" value="Bacteria"/>
</dbReference>
<dbReference type="HOGENOM" id="CLU_183816_2_0_11"/>
<dbReference type="UniPathway" id="UPA00997"/>
<dbReference type="Proteomes" id="UP000001685">
    <property type="component" value="Chromosome"/>
</dbReference>
<dbReference type="GO" id="GO:0070628">
    <property type="term" value="F:proteasome binding"/>
    <property type="evidence" value="ECO:0007669"/>
    <property type="project" value="UniProtKB-UniRule"/>
</dbReference>
<dbReference type="GO" id="GO:0031386">
    <property type="term" value="F:protein tag activity"/>
    <property type="evidence" value="ECO:0007669"/>
    <property type="project" value="UniProtKB-UniRule"/>
</dbReference>
<dbReference type="GO" id="GO:0019941">
    <property type="term" value="P:modification-dependent protein catabolic process"/>
    <property type="evidence" value="ECO:0007669"/>
    <property type="project" value="UniProtKB-UniRule"/>
</dbReference>
<dbReference type="GO" id="GO:0010498">
    <property type="term" value="P:proteasomal protein catabolic process"/>
    <property type="evidence" value="ECO:0007669"/>
    <property type="project" value="UniProtKB-UniRule"/>
</dbReference>
<dbReference type="GO" id="GO:0070490">
    <property type="term" value="P:protein pupylation"/>
    <property type="evidence" value="ECO:0007669"/>
    <property type="project" value="UniProtKB-UniRule"/>
</dbReference>
<dbReference type="HAMAP" id="MF_02106">
    <property type="entry name" value="Pup"/>
    <property type="match status" value="1"/>
</dbReference>
<dbReference type="InterPro" id="IPR008515">
    <property type="entry name" value="Ubiquitin-like_Pup"/>
</dbReference>
<dbReference type="NCBIfam" id="TIGR03687">
    <property type="entry name" value="pupylate_cterm"/>
    <property type="match status" value="1"/>
</dbReference>
<dbReference type="Pfam" id="PF05639">
    <property type="entry name" value="Pup"/>
    <property type="match status" value="1"/>
</dbReference>
<organism>
    <name type="scientific">Streptomyces griseus subsp. griseus (strain JCM 4626 / CBS 651.72 / NBRC 13350 / KCC S-0626 / ISP 5235)</name>
    <dbReference type="NCBI Taxonomy" id="455632"/>
    <lineage>
        <taxon>Bacteria</taxon>
        <taxon>Bacillati</taxon>
        <taxon>Actinomycetota</taxon>
        <taxon>Actinomycetes</taxon>
        <taxon>Kitasatosporales</taxon>
        <taxon>Streptomycetaceae</taxon>
        <taxon>Streptomyces</taxon>
    </lineage>
</organism>
<evidence type="ECO:0000255" key="1">
    <source>
        <dbReference type="HAMAP-Rule" id="MF_02106"/>
    </source>
</evidence>
<evidence type="ECO:0000256" key="2">
    <source>
        <dbReference type="SAM" id="MobiDB-lite"/>
    </source>
</evidence>